<proteinExistence type="inferred from homology"/>
<dbReference type="EMBL" id="AB012242">
    <property type="status" value="NOT_ANNOTATED_CDS"/>
    <property type="molecule type" value="Genomic_DNA"/>
</dbReference>
<dbReference type="EMBL" id="AB017061">
    <property type="status" value="NOT_ANNOTATED_CDS"/>
    <property type="molecule type" value="Genomic_DNA"/>
</dbReference>
<dbReference type="EMBL" id="CP002688">
    <property type="protein sequence ID" value="AED95741.1"/>
    <property type="molecule type" value="Genomic_DNA"/>
</dbReference>
<dbReference type="RefSeq" id="NP_001032038.1">
    <property type="nucleotide sequence ID" value="NM_001036961.2"/>
</dbReference>
<dbReference type="SMR" id="P82727"/>
<dbReference type="PaxDb" id="3702-AT5G48905.1"/>
<dbReference type="ProteomicsDB" id="224026"/>
<dbReference type="EnsemblPlants" id="AT5G48905.1">
    <property type="protein sequence ID" value="AT5G48905.1"/>
    <property type="gene ID" value="AT5G48905"/>
</dbReference>
<dbReference type="GeneID" id="3771469"/>
<dbReference type="Gramene" id="AT5G48905.1">
    <property type="protein sequence ID" value="AT5G48905.1"/>
    <property type="gene ID" value="AT5G48905"/>
</dbReference>
<dbReference type="KEGG" id="ath:AT5G48905"/>
<dbReference type="Araport" id="AT5G48905"/>
<dbReference type="TAIR" id="AT5G48905">
    <property type="gene designation" value="LCR12"/>
</dbReference>
<dbReference type="HOGENOM" id="CLU_182511_1_0_1"/>
<dbReference type="InParanoid" id="P82727"/>
<dbReference type="OMA" id="CRQELEP"/>
<dbReference type="PhylomeDB" id="P82727"/>
<dbReference type="PRO" id="PR:P82727"/>
<dbReference type="Proteomes" id="UP000006548">
    <property type="component" value="Chromosome 5"/>
</dbReference>
<dbReference type="ExpressionAtlas" id="P82727">
    <property type="expression patterns" value="baseline"/>
</dbReference>
<dbReference type="GO" id="GO:0005576">
    <property type="term" value="C:extracellular region"/>
    <property type="evidence" value="ECO:0007669"/>
    <property type="project" value="UniProtKB-SubCell"/>
</dbReference>
<dbReference type="GO" id="GO:0050832">
    <property type="term" value="P:defense response to fungus"/>
    <property type="evidence" value="ECO:0007669"/>
    <property type="project" value="UniProtKB-KW"/>
</dbReference>
<dbReference type="GO" id="GO:0031640">
    <property type="term" value="P:killing of cells of another organism"/>
    <property type="evidence" value="ECO:0007669"/>
    <property type="project" value="UniProtKB-KW"/>
</dbReference>
<dbReference type="InterPro" id="IPR010851">
    <property type="entry name" value="DEFL"/>
</dbReference>
<dbReference type="PANTHER" id="PTHR33830:SF21">
    <property type="entry name" value="DEFENSIN-LIKE PROTEIN 165-RELATED"/>
    <property type="match status" value="1"/>
</dbReference>
<dbReference type="PANTHER" id="PTHR33830">
    <property type="entry name" value="DEFENSIN-LIKE PROTEIN 184-RELATED"/>
    <property type="match status" value="1"/>
</dbReference>
<dbReference type="Pfam" id="PF07333">
    <property type="entry name" value="SLR1-BP"/>
    <property type="match status" value="1"/>
</dbReference>
<feature type="signal peptide" evidence="2">
    <location>
        <begin position="1"/>
        <end position="27"/>
    </location>
</feature>
<feature type="chain" id="PRO_0000017254" description="Putative defensin-like protein 165">
    <location>
        <begin position="28"/>
        <end position="84"/>
    </location>
</feature>
<feature type="disulfide bond" evidence="1">
    <location>
        <begin position="31"/>
        <end position="78"/>
    </location>
</feature>
<feature type="disulfide bond" evidence="1">
    <location>
        <begin position="41"/>
        <end position="60"/>
    </location>
</feature>
<feature type="disulfide bond" evidence="1">
    <location>
        <begin position="46"/>
        <end position="72"/>
    </location>
</feature>
<feature type="disulfide bond" evidence="1">
    <location>
        <begin position="50"/>
        <end position="74"/>
    </location>
</feature>
<keyword id="KW-0929">Antimicrobial</keyword>
<keyword id="KW-1015">Disulfide bond</keyword>
<keyword id="KW-0295">Fungicide</keyword>
<keyword id="KW-0611">Plant defense</keyword>
<keyword id="KW-1185">Reference proteome</keyword>
<keyword id="KW-0964">Secreted</keyword>
<keyword id="KW-0732">Signal</keyword>
<gene>
    <name type="primary">LCR12</name>
    <name type="ordered locus">At5g48905</name>
    <name type="ORF">K19E20</name>
    <name type="ORF">K24G6</name>
</gene>
<evidence type="ECO:0000250" key="1"/>
<evidence type="ECO:0000255" key="2"/>
<evidence type="ECO:0000305" key="3"/>
<name>DF165_ARATH</name>
<organism evidence="3">
    <name type="scientific">Arabidopsis thaliana</name>
    <name type="common">Mouse-ear cress</name>
    <dbReference type="NCBI Taxonomy" id="3702"/>
    <lineage>
        <taxon>Eukaryota</taxon>
        <taxon>Viridiplantae</taxon>
        <taxon>Streptophyta</taxon>
        <taxon>Embryophyta</taxon>
        <taxon>Tracheophyta</taxon>
        <taxon>Spermatophyta</taxon>
        <taxon>Magnoliopsida</taxon>
        <taxon>eudicotyledons</taxon>
        <taxon>Gunneridae</taxon>
        <taxon>Pentapetalae</taxon>
        <taxon>rosids</taxon>
        <taxon>malvids</taxon>
        <taxon>Brassicales</taxon>
        <taxon>Brassicaceae</taxon>
        <taxon>Camelineae</taxon>
        <taxon>Arabidopsis</taxon>
    </lineage>
</organism>
<reference key="1">
    <citation type="journal article" date="1998" name="DNA Res.">
        <title>Structural analysis of Arabidopsis thaliana chromosome 5. VI. Sequence features of the regions of 1,367,185 bp covered by 19 physically assigned P1 and TAC clones.</title>
        <authorList>
            <person name="Kotani H."/>
            <person name="Nakamura Y."/>
            <person name="Sato S."/>
            <person name="Asamizu E."/>
            <person name="Kaneko T."/>
            <person name="Miyajima N."/>
            <person name="Tabata S."/>
        </authorList>
    </citation>
    <scope>NUCLEOTIDE SEQUENCE [LARGE SCALE GENOMIC DNA]</scope>
    <source>
        <strain>cv. Columbia</strain>
    </source>
</reference>
<reference evidence="3" key="2">
    <citation type="journal article" date="1999" name="DNA Res.">
        <title>Structural analysis of Arabidopsis thaliana chromosome 5. IX. Sequence features of the regions of 1,011,550 bp covered by seventeen P1 and TAC clones.</title>
        <authorList>
            <person name="Kaneko T."/>
            <person name="Katoh T."/>
            <person name="Sato S."/>
            <person name="Nakamura Y."/>
            <person name="Asamizu E."/>
            <person name="Kotani H."/>
            <person name="Miyajima N."/>
            <person name="Tabata S."/>
        </authorList>
    </citation>
    <scope>NUCLEOTIDE SEQUENCE [LARGE SCALE GENOMIC DNA]</scope>
    <source>
        <strain>cv. Columbia</strain>
    </source>
</reference>
<reference key="3">
    <citation type="journal article" date="2017" name="Plant J.">
        <title>Araport11: a complete reannotation of the Arabidopsis thaliana reference genome.</title>
        <authorList>
            <person name="Cheng C.Y."/>
            <person name="Krishnakumar V."/>
            <person name="Chan A.P."/>
            <person name="Thibaud-Nissen F."/>
            <person name="Schobel S."/>
            <person name="Town C.D."/>
        </authorList>
    </citation>
    <scope>GENOME REANNOTATION</scope>
    <source>
        <strain>cv. Columbia</strain>
    </source>
</reference>
<reference evidence="3" key="4">
    <citation type="journal article" date="2001" name="Plant Mol. Biol.">
        <title>Two large Arabidopsis thaliana gene families are homologous to the Brassica gene superfamily that encodes pollen coat proteins and the male component of the self-incompatibility response.</title>
        <authorList>
            <person name="Vanoosthuyse V."/>
            <person name="Miege C."/>
            <person name="Dumas C."/>
            <person name="Cock J.M."/>
        </authorList>
    </citation>
    <scope>IDENTIFICATION</scope>
</reference>
<reference key="5">
    <citation type="journal article" date="2005" name="Plant Physiol.">
        <title>Genome organization of more than 300 defensin-like genes in Arabidopsis.</title>
        <authorList>
            <person name="Silverstein K.A.T."/>
            <person name="Graham M.A."/>
            <person name="Paape T.D."/>
            <person name="VandenBosch K.A."/>
        </authorList>
    </citation>
    <scope>GENE FAMILY</scope>
</reference>
<comment type="subcellular location">
    <subcellularLocation>
        <location evidence="1">Secreted</location>
    </subcellularLocation>
</comment>
<comment type="similarity">
    <text evidence="3">Belongs to the DEFL family.</text>
</comment>
<accession>P82727</accession>
<protein>
    <recommendedName>
        <fullName>Putative defensin-like protein 165</fullName>
    </recommendedName>
    <alternativeName>
        <fullName>Putative low-molecular-weight cysteine-rich protein 12</fullName>
        <shortName>Protein LCR12</shortName>
    </alternativeName>
</protein>
<sequence length="84" mass="9529">MSTKLFSYFMLLVVLFSVLTIIPKTEAQKRCRQELEPGKQCVLAKCRELCFKQLKGFGSCIEKPPGSSKYTCNCFYNCGPPGFF</sequence>